<keyword id="KW-0975">Bacterial flagellum</keyword>
<keyword id="KW-0903">Direct protein sequencing</keyword>
<keyword id="KW-0574">Periplasm</keyword>
<keyword id="KW-0732">Signal</keyword>
<organism>
    <name type="scientific">Spirochaeta aurantia</name>
    <dbReference type="NCBI Taxonomy" id="147"/>
    <lineage>
        <taxon>Bacteria</taxon>
        <taxon>Pseudomonadati</taxon>
        <taxon>Spirochaetota</taxon>
        <taxon>Spirochaetia</taxon>
        <taxon>Spirochaetales</taxon>
        <taxon>Spirochaetaceae</taxon>
        <taxon>Spirochaeta</taxon>
    </lineage>
</organism>
<sequence length="337" mass="36858">MKRFFAILGAALFVGNSGAFAEQATLIDFSKLVGEGNTGLHAPTTIDYSRQAGSAYSAEDKAAMKISLAIPSWEIELASSSQTVENQTLSLVTAAPVKQDAARYGGETVMGVRIHFPSFGINSFAVIKPPFTIPAYATLGDATAQNAVAGGQFDGFGVLKNVGVIKSIQINILGRNYLNRLSLLLEDQNGDEREIVMGYLNFDGWKSLQWNNPNYQTEVRNRDLQIVPLYPRSAPLIKLKGIKIHRDGSQEGGDIVSYIKDIKVIYDQAVVDRNSDVDDEAIWGILRQREEQYRNFELAKLGNLQVLRSLEKKKMAKEADFDQAAPAAAAARAPATN</sequence>
<dbReference type="EMBL" id="M24459">
    <property type="protein sequence ID" value="AAA99273.1"/>
    <property type="molecule type" value="Genomic_DNA"/>
</dbReference>
<dbReference type="PIR" id="A32814">
    <property type="entry name" value="A32814"/>
</dbReference>
<dbReference type="GO" id="GO:0030288">
    <property type="term" value="C:outer membrane-bounded periplasmic space"/>
    <property type="evidence" value="ECO:0007669"/>
    <property type="project" value="InterPro"/>
</dbReference>
<dbReference type="GO" id="GO:0055040">
    <property type="term" value="C:periplasmic flagellum"/>
    <property type="evidence" value="ECO:0007669"/>
    <property type="project" value="UniProtKB-SubCell"/>
</dbReference>
<dbReference type="GO" id="GO:0071973">
    <property type="term" value="P:bacterial-type flagellum-dependent cell motility"/>
    <property type="evidence" value="ECO:0007669"/>
    <property type="project" value="InterPro"/>
</dbReference>
<dbReference type="InterPro" id="IPR006714">
    <property type="entry name" value="FlaA"/>
</dbReference>
<dbReference type="InterPro" id="IPR016369">
    <property type="entry name" value="FlaA_Spirochaetes"/>
</dbReference>
<dbReference type="Pfam" id="PF04620">
    <property type="entry name" value="FlaA"/>
    <property type="match status" value="1"/>
</dbReference>
<dbReference type="PIRSF" id="PIRSF002892">
    <property type="entry name" value="Flagellin_A"/>
    <property type="match status" value="1"/>
</dbReference>
<gene>
    <name type="primary">flaA</name>
</gene>
<feature type="signal peptide" evidence="1">
    <location>
        <begin position="1"/>
        <end position="21"/>
    </location>
</feature>
<feature type="chain" id="PRO_0000009352" description="Flagellar filament outer layer protein">
    <location>
        <begin position="22"/>
        <end position="337"/>
    </location>
</feature>
<protein>
    <recommendedName>
        <fullName>Flagellar filament outer layer protein</fullName>
    </recommendedName>
    <alternativeName>
        <fullName>Sheath protein</fullName>
    </alternativeName>
</protein>
<evidence type="ECO:0000269" key="1">
    <source>
    </source>
</evidence>
<proteinExistence type="evidence at protein level"/>
<name>FLAA_SPIAU</name>
<reference key="1">
    <citation type="journal article" date="1989" name="J. Bacteriol.">
        <title>Cloning and sequence analysis of flaA, a gene encoding a Spirochaeta aurantia flagellar filament surface antigen.</title>
        <authorList>
            <person name="Brahamsha B."/>
            <person name="Greenberg E.P."/>
        </authorList>
    </citation>
    <scope>NUCLEOTIDE SEQUENCE [GENOMIC DNA]</scope>
</reference>
<reference key="2">
    <citation type="submission" date="1991-01" db="EMBL/GenBank/DDBJ databases">
        <authorList>
            <person name="Greenberg E.P."/>
        </authorList>
    </citation>
    <scope>SEQUENCE REVISION</scope>
</reference>
<reference key="3">
    <citation type="journal article" date="1991" name="J. Bacteriol.">
        <title>N-terminal amino acid sequences and amino acid compositions of the Spirochaeta aurantia flagellar filament polypeptides.</title>
        <authorList>
            <person name="Parales J. Jr."/>
            <person name="Greenberg E.P."/>
        </authorList>
    </citation>
    <scope>PROTEIN SEQUENCE OF 22-49</scope>
    <source>
        <strain>M1</strain>
    </source>
</reference>
<accession>P21982</accession>
<comment type="function">
    <text>Component of the outer layer of the flagella.</text>
</comment>
<comment type="subunit">
    <text>The flagellum consists of an outer layer composed of repeating units of FlaA around a core that contains one or all of five antigenically related polypeptides.</text>
</comment>
<comment type="subcellular location">
    <subcellularLocation>
        <location>Periplasmic flagellum</location>
    </subcellularLocation>
    <subcellularLocation>
        <location>Periplasm</location>
    </subcellularLocation>
</comment>